<protein>
    <recommendedName>
        <fullName evidence="1">Transcription antitermination protein NusB</fullName>
    </recommendedName>
    <alternativeName>
        <fullName evidence="1">Antitermination factor NusB</fullName>
    </alternativeName>
</protein>
<feature type="chain" id="PRO_1000092522" description="Transcription antitermination protein NusB">
    <location>
        <begin position="1"/>
        <end position="137"/>
    </location>
</feature>
<name>NUSB_ACTPJ</name>
<evidence type="ECO:0000255" key="1">
    <source>
        <dbReference type="HAMAP-Rule" id="MF_00073"/>
    </source>
</evidence>
<proteinExistence type="inferred from homology"/>
<gene>
    <name evidence="1" type="primary">nusB</name>
    <name type="ordered locus">APJL_0202</name>
</gene>
<comment type="function">
    <text evidence="1">Involved in transcription antitermination. Required for transcription of ribosomal RNA (rRNA) genes. Binds specifically to the boxA antiterminator sequence of the ribosomal RNA (rrn) operons.</text>
</comment>
<comment type="similarity">
    <text evidence="1">Belongs to the NusB family.</text>
</comment>
<dbReference type="EMBL" id="CP000687">
    <property type="protein sequence ID" value="ABY68806.1"/>
    <property type="molecule type" value="Genomic_DNA"/>
</dbReference>
<dbReference type="RefSeq" id="WP_005595979.1">
    <property type="nucleotide sequence ID" value="NC_010278.1"/>
</dbReference>
<dbReference type="SMR" id="B0BSK4"/>
<dbReference type="GeneID" id="48598348"/>
<dbReference type="KEGG" id="apj:APJL_0202"/>
<dbReference type="HOGENOM" id="CLU_087843_4_1_6"/>
<dbReference type="Proteomes" id="UP000008547">
    <property type="component" value="Chromosome"/>
</dbReference>
<dbReference type="GO" id="GO:0005829">
    <property type="term" value="C:cytosol"/>
    <property type="evidence" value="ECO:0007669"/>
    <property type="project" value="TreeGrafter"/>
</dbReference>
<dbReference type="GO" id="GO:0003723">
    <property type="term" value="F:RNA binding"/>
    <property type="evidence" value="ECO:0007669"/>
    <property type="project" value="UniProtKB-UniRule"/>
</dbReference>
<dbReference type="GO" id="GO:0006353">
    <property type="term" value="P:DNA-templated transcription termination"/>
    <property type="evidence" value="ECO:0007669"/>
    <property type="project" value="UniProtKB-UniRule"/>
</dbReference>
<dbReference type="GO" id="GO:0031564">
    <property type="term" value="P:transcription antitermination"/>
    <property type="evidence" value="ECO:0007669"/>
    <property type="project" value="UniProtKB-KW"/>
</dbReference>
<dbReference type="CDD" id="cd00619">
    <property type="entry name" value="Terminator_NusB"/>
    <property type="match status" value="1"/>
</dbReference>
<dbReference type="FunFam" id="1.10.940.10:FF:000001">
    <property type="entry name" value="Transcription antitermination factor NusB"/>
    <property type="match status" value="1"/>
</dbReference>
<dbReference type="Gene3D" id="1.10.940.10">
    <property type="entry name" value="NusB-like"/>
    <property type="match status" value="1"/>
</dbReference>
<dbReference type="HAMAP" id="MF_00073">
    <property type="entry name" value="NusB"/>
    <property type="match status" value="1"/>
</dbReference>
<dbReference type="InterPro" id="IPR035926">
    <property type="entry name" value="NusB-like_sf"/>
</dbReference>
<dbReference type="InterPro" id="IPR011605">
    <property type="entry name" value="NusB_fam"/>
</dbReference>
<dbReference type="InterPro" id="IPR006027">
    <property type="entry name" value="NusB_RsmB_TIM44"/>
</dbReference>
<dbReference type="NCBIfam" id="TIGR01951">
    <property type="entry name" value="nusB"/>
    <property type="match status" value="1"/>
</dbReference>
<dbReference type="PANTHER" id="PTHR11078:SF3">
    <property type="entry name" value="ANTITERMINATION NUSB DOMAIN-CONTAINING PROTEIN"/>
    <property type="match status" value="1"/>
</dbReference>
<dbReference type="PANTHER" id="PTHR11078">
    <property type="entry name" value="N UTILIZATION SUBSTANCE PROTEIN B-RELATED"/>
    <property type="match status" value="1"/>
</dbReference>
<dbReference type="Pfam" id="PF01029">
    <property type="entry name" value="NusB"/>
    <property type="match status" value="1"/>
</dbReference>
<dbReference type="SUPFAM" id="SSF48013">
    <property type="entry name" value="NusB-like"/>
    <property type="match status" value="1"/>
</dbReference>
<accession>B0BSK4</accession>
<organism>
    <name type="scientific">Actinobacillus pleuropneumoniae serotype 3 (strain JL03)</name>
    <dbReference type="NCBI Taxonomy" id="434271"/>
    <lineage>
        <taxon>Bacteria</taxon>
        <taxon>Pseudomonadati</taxon>
        <taxon>Pseudomonadota</taxon>
        <taxon>Gammaproteobacteria</taxon>
        <taxon>Pasteurellales</taxon>
        <taxon>Pasteurellaceae</taxon>
        <taxon>Actinobacillus</taxon>
    </lineage>
</organism>
<sequence>MKVSPRRRARECAVQALYSWYVSQNSVEEVELSFVTDQDMNGVDLPYFRKLLRGTVLYVEAIDNDLRPFLDRAEDEVDPIERTILRLSAYELKYELDVPYKVVINEGIEVAKVFGSDDSHKYINGILDKLAPALGRK</sequence>
<reference key="1">
    <citation type="journal article" date="2008" name="PLoS ONE">
        <title>Genome biology of Actinobacillus pleuropneumoniae JL03, an isolate of serotype 3 prevalent in China.</title>
        <authorList>
            <person name="Xu Z."/>
            <person name="Zhou Y."/>
            <person name="Li L."/>
            <person name="Zhou R."/>
            <person name="Xiao S."/>
            <person name="Wan Y."/>
            <person name="Zhang S."/>
            <person name="Wang K."/>
            <person name="Li W."/>
            <person name="Li L."/>
            <person name="Jin H."/>
            <person name="Kang M."/>
            <person name="Dalai B."/>
            <person name="Li T."/>
            <person name="Liu L."/>
            <person name="Cheng Y."/>
            <person name="Zhang L."/>
            <person name="Xu T."/>
            <person name="Zheng H."/>
            <person name="Pu S."/>
            <person name="Wang B."/>
            <person name="Gu W."/>
            <person name="Zhang X.L."/>
            <person name="Zhu G.-F."/>
            <person name="Wang S."/>
            <person name="Zhao G.-P."/>
            <person name="Chen H."/>
        </authorList>
    </citation>
    <scope>NUCLEOTIDE SEQUENCE [LARGE SCALE GENOMIC DNA]</scope>
    <source>
        <strain>JL03</strain>
    </source>
</reference>
<keyword id="KW-0694">RNA-binding</keyword>
<keyword id="KW-0804">Transcription</keyword>
<keyword id="KW-0889">Transcription antitermination</keyword>
<keyword id="KW-0805">Transcription regulation</keyword>